<gene>
    <name evidence="41" type="primary">H3c1</name>
    <name type="synonym">H3a</name>
    <name type="synonym">Hist1h3a</name>
</gene>
<gene>
    <name evidence="38" type="primary">H3c8</name>
    <name type="synonym">H3.1-221</name>
    <name type="synonym">H3g</name>
    <name type="synonym">Hist1h3g</name>
</gene>
<gene>
    <name evidence="39" type="primary">H3c10</name>
    <name type="synonym">H3.1-291</name>
    <name type="synonym">H3h</name>
    <name type="synonym">Hist1h3h</name>
</gene>
<gene>
    <name evidence="40" type="primary">H3c11</name>
    <name type="synonym">H3.1-I</name>
    <name type="synonym">H3i</name>
    <name type="synonym">Hist1h3i</name>
</gene>
<keyword id="KW-0002">3D-structure</keyword>
<keyword id="KW-0007">Acetylation</keyword>
<keyword id="KW-0013">ADP-ribosylation</keyword>
<keyword id="KW-0158">Chromosome</keyword>
<keyword id="KW-0164">Citrullination</keyword>
<keyword id="KW-0903">Direct protein sequencing</keyword>
<keyword id="KW-0238">DNA-binding</keyword>
<keyword id="KW-0379">Hydroxylation</keyword>
<keyword id="KW-0449">Lipoprotein</keyword>
<keyword id="KW-0488">Methylation</keyword>
<keyword id="KW-0544">Nucleosome core</keyword>
<keyword id="KW-0539">Nucleus</keyword>
<keyword id="KW-0597">Phosphoprotein</keyword>
<keyword id="KW-1185">Reference proteome</keyword>
<keyword id="KW-0832">Ubl conjugation</keyword>
<evidence type="ECO:0000250" key="1"/>
<evidence type="ECO:0000250" key="2">
    <source>
        <dbReference type="UniProtKB" id="P68431"/>
    </source>
</evidence>
<evidence type="ECO:0000250" key="3">
    <source>
        <dbReference type="UniProtKB" id="P84243"/>
    </source>
</evidence>
<evidence type="ECO:0000250" key="4">
    <source>
        <dbReference type="UniProtKB" id="Q6LED0"/>
    </source>
</evidence>
<evidence type="ECO:0000250" key="5">
    <source>
        <dbReference type="UniProtKB" id="Q71DI3"/>
    </source>
</evidence>
<evidence type="ECO:0000255" key="6"/>
<evidence type="ECO:0000256" key="7">
    <source>
        <dbReference type="SAM" id="MobiDB-lite"/>
    </source>
</evidence>
<evidence type="ECO:0000269" key="8">
    <source>
    </source>
</evidence>
<evidence type="ECO:0000269" key="9">
    <source>
    </source>
</evidence>
<evidence type="ECO:0000269" key="10">
    <source>
    </source>
</evidence>
<evidence type="ECO:0000269" key="11">
    <source>
    </source>
</evidence>
<evidence type="ECO:0000269" key="12">
    <source>
    </source>
</evidence>
<evidence type="ECO:0000269" key="13">
    <source>
    </source>
</evidence>
<evidence type="ECO:0000269" key="14">
    <source>
    </source>
</evidence>
<evidence type="ECO:0000269" key="15">
    <source>
    </source>
</evidence>
<evidence type="ECO:0000269" key="16">
    <source>
    </source>
</evidence>
<evidence type="ECO:0000269" key="17">
    <source>
    </source>
</evidence>
<evidence type="ECO:0000269" key="18">
    <source>
    </source>
</evidence>
<evidence type="ECO:0000269" key="19">
    <source>
    </source>
</evidence>
<evidence type="ECO:0000269" key="20">
    <source>
    </source>
</evidence>
<evidence type="ECO:0000269" key="21">
    <source>
    </source>
</evidence>
<evidence type="ECO:0000269" key="22">
    <source>
    </source>
</evidence>
<evidence type="ECO:0000269" key="23">
    <source>
    </source>
</evidence>
<evidence type="ECO:0000269" key="24">
    <source>
    </source>
</evidence>
<evidence type="ECO:0000269" key="25">
    <source>
    </source>
</evidence>
<evidence type="ECO:0000269" key="26">
    <source>
    </source>
</evidence>
<evidence type="ECO:0000269" key="27">
    <source>
    </source>
</evidence>
<evidence type="ECO:0000269" key="28">
    <source>
    </source>
</evidence>
<evidence type="ECO:0000269" key="29">
    <source>
    </source>
</evidence>
<evidence type="ECO:0000269" key="30">
    <source>
    </source>
</evidence>
<evidence type="ECO:0000269" key="31">
    <source>
    </source>
</evidence>
<evidence type="ECO:0000269" key="32">
    <source>
    </source>
</evidence>
<evidence type="ECO:0000269" key="33">
    <source>
    </source>
</evidence>
<evidence type="ECO:0000269" key="34">
    <source>
    </source>
</evidence>
<evidence type="ECO:0000305" key="35"/>
<evidence type="ECO:0000305" key="36">
    <source>
    </source>
</evidence>
<evidence type="ECO:0000305" key="37">
    <source>
    </source>
</evidence>
<evidence type="ECO:0000312" key="38">
    <source>
        <dbReference type="MGI" id="MGI:2145541"/>
    </source>
</evidence>
<evidence type="ECO:0000312" key="39">
    <source>
        <dbReference type="MGI" id="MGI:2448349"/>
    </source>
</evidence>
<evidence type="ECO:0000312" key="40">
    <source>
        <dbReference type="MGI" id="MGI:2448350"/>
    </source>
</evidence>
<evidence type="ECO:0000312" key="41">
    <source>
        <dbReference type="MGI" id="MGI:2668828"/>
    </source>
</evidence>
<evidence type="ECO:0007829" key="42">
    <source>
        <dbReference type="PDB" id="5B1M"/>
    </source>
</evidence>
<evidence type="ECO:0007829" key="43">
    <source>
        <dbReference type="PDB" id="5IX1"/>
    </source>
</evidence>
<evidence type="ECO:0007829" key="44">
    <source>
        <dbReference type="PDB" id="7QRD"/>
    </source>
</evidence>
<comment type="function">
    <text>Core component of nucleosome. Nucleosomes wrap and compact DNA into chromatin, limiting DNA accessibility to the cellular machineries which require DNA as a template. Histones thereby play a central role in transcription regulation, DNA repair, DNA replication and chromosomal stability. DNA accessibility is regulated via a complex set of post-translational modifications of histones, also called histone code, and nucleosome remodeling.</text>
</comment>
<comment type="subunit">
    <text evidence="2">The nucleosome is a histone octamer containing two molecules each of H2A, H2B, H3 and H4 assembled in one H3-H4 heterotetramer and two H2A-H2B heterodimers. The octamer wraps approximately 147 bp of DNA. Interacts with TONSL; CHAF1A; CHAF1B; MCM2 and DNAJC9 (By similarity). Interacts with NASP; NASP is a histone chaperone that stabilizes and maintains a soluble pool of Histone H3-H4 dimers (By similarity).</text>
</comment>
<comment type="interaction">
    <interactant intactId="EBI-79743">
        <id>P68433</id>
    </interactant>
    <interactant intactId="EBI-78119">
        <id>P83917</id>
        <label>Cbx1</label>
    </interactant>
    <organismsDiffer>false</organismsDiffer>
    <experiments>6</experiments>
</comment>
<comment type="interaction">
    <interactant intactId="EBI-79743">
        <id>P68433</id>
    </interactant>
    <interactant intactId="EBI-1268586">
        <id>Q8WTS6</id>
        <label>SETD7</label>
    </interactant>
    <organismsDiffer>true</organismsDiffer>
    <experiments>2</experiments>
</comment>
<comment type="subcellular location">
    <subcellularLocation>
        <location>Nucleus</location>
    </subcellularLocation>
    <subcellularLocation>
        <location>Chromosome</location>
    </subcellularLocation>
</comment>
<comment type="developmental stage">
    <text evidence="31">Expressed during S phase, then expression strongly decreases as cell division slows down during the process of differentiation.</text>
</comment>
<comment type="PTM">
    <text evidence="10 11 13 14 16 17 23">Acetylation is generally linked to gene activation. Acetylation on Lys-10 (H3K9ac) impairs methylation at Arg-9 (H3R8me2s). Acetylation on Lys-19 (H3K18ac) and Lys-24 (H3K24ac) favors methylation at Arg-18 (H3R17me). Acetylation at Lys-123 (H3K122ac) by EP300/p300 plays a central role in chromatin structure: localizes at the surface of the histone octamer and stimulates transcription, possibly by promoting nucleosome instability.</text>
</comment>
<comment type="PTM">
    <text evidence="10 11 13 15 16 17">Citrullination at Arg-9 (H3R8ci) and/or Arg-18 (H3R17ci) by PADI4 impairs methylation and represses transcription.</text>
</comment>
<comment type="PTM">
    <text evidence="2">Asymmetric dimethylation at Arg-18 (H3R17me2a) by CARM1 is linked to gene activation. Symmetric dimethylation at Arg-9 (H3R8me2s) by PRMT5 is linked to gene repression. Asymmetric dimethylation at Arg-3 (H3R2me2a) by PRMT6 is linked to gene repression and is mutually exclusive with H3 Lys-5 methylation (H3K4me2 and H3K4me3). H3R2me2a is present at the 3' of genes regardless of their transcription state and is enriched on inactive promoters, while it is absent on active promoters (By similarity).</text>
</comment>
<comment type="PTM">
    <text evidence="8 10 12 14 16 18 20 21 22 23">Methylation at Lys-5 (H3K4me), Lys-37 (H3K36me) and Lys-80 (H3K79me) are linked to gene activation. Methylation at Lys-5 (H3K4me) facilitates subsequent acetylation of H3 and H4. Methylation at Lys-80 (H3K79me) is associated with DNA double-strand break (DSB) responses and is a specific target for TP53BP1. Methylation at Lys-10 (H3K9me) and Lys-28 (H3K27me) are linked to gene repression. Methylation at Lys-10 (H3K9me) is a specific target for HP1 proteins (CBX1, CBX3 and CBX5) and prevents subsequent phosphorylation at Ser-11 (H3S10ph) and acetylation of H3 and H4. Methylation at Lys-5 (H3K4me) and Lys-80 (H3K79me) require preliminary monoubiquitination of H2B at 'Lys-120'. Methylation at Lys-10 (H3K9me) and Lys-28 (H3K27me) are enriched in inactive X chromosome chromatin. Monomethylation at Lys-57 (H3K56me1) by EHMT2/G9A in G1 phase promotes interaction with PCNA and is required for DNA replication.</text>
</comment>
<comment type="PTM">
    <text evidence="2 8 9 10 12 14 16 18 19 20 21 23 24">Phosphorylated at Thr-4 (H3T3ph) by VRK1 (By similarity). Phosphorylated at Thr-4 (H3T3ph) by HASPIN during prophase and dephosphorylated during anaphase. Phosphorylation at Ser-11 (H3S10ph) by AURKB is crucial for chromosome condensation and cell-cycle progression during mitosis and meiosis. In addition phosphorylation at Ser-11 (H3S10ph) by RPS6KA4 and RPS6KA5 is important during interphase because it enables the transcription of genes following external stimulation, like mitogens, stress, growth factors or UV irradiation and result in the activation of genes, such as c-fos and c-jun. Phosphorylation at Ser-11 (H3S10ph), which is linked to gene activation, prevents methylation at Lys-10 (H3K9me) but facilitates acetylation of H3 and H4. Phosphorylation at Ser-11 (H3S10ph) by AURKB mediates the dissociation of HP1 proteins (CBX1, CBX3 and CBX5) from heterochromatin. Phosphorylation at Ser-11 (H3S10ph) is also an essential regulatory mechanism for neoplastic cell transformation. Phosphorylated at Ser-29 (H3S28ph) by MAP3K20 isoform 1, RPS6KA5 or AURKB during mitosis or upon ultraviolet B irradiation. Phosphorylation at Thr-7 (H3T6ph) by PRKCB is a specific tag for epigenetic transcriptional activation that prevents demethylation of Lys-5 (H3K4me) by LSD1/KDM1A. At centromeres, specifically phosphorylated at Thr-12 (H3T11ph) from prophase to early anaphase, by DAPK3 and PKN1. Phosphorylation at Thr-12 (H3T11ph) by PKN1 or isoform M2 of PKM (PKM2) is a specific tag for epigenetic transcriptional activation that promotes demethylation of Lys-10 (H3K9me) by KDM4C/JMJD2C. Phosphorylation at Thr-12 (H3T11ph) by chromatin-associated CHEK1 regulates the transcription of cell cycle regulatory genes by modulating acetylation of Lys-10 (H3K9ac). Phosphorylation at Tyr-42 (H3Y41ph) by JAK2 promotes exclusion of CBX5 (HP1 alpha) from chromatin.</text>
</comment>
<comment type="PTM">
    <text evidence="1 25">Ubiquitinated by the CUL4-DDB-RBX1 complex in response to ultraviolet irradiation. This may weaken the interaction between histones and DNA and facilitate DNA accessibility to repair proteins (By similarity). Monoubiquitinated by RAG1 in lymphoid cells, monoubiquitination is required for V(D)J recombination.</text>
</comment>
<comment type="PTM">
    <text evidence="2">Lysine deamination at Lys-5 (H3K4all) to form allysine is mediated by LOXL2. Allysine formation by LOXL2 only takes place on H3K4me3 and results in gene repression (By similarity).</text>
</comment>
<comment type="PTM">
    <text evidence="26">Crotonylation (Kcr) is specifically present in male germ cells and marks testis-specific genes in post-meiotic cells, including X-linked genes that escape sex chromosome inactivation in haploid cells. Crotonylation marks active promoters and enhancers and confers resistance to transcriptional repressors. It is also associated with post-meiotically activated genes on autosomes.</text>
</comment>
<comment type="PTM">
    <text evidence="29">Butyrylation of histones marks active promoters and competes with histone acetylation. It is present during late spermatogenesis.</text>
</comment>
<comment type="PTM">
    <text evidence="30">Hydroxybutyrylation of histones is induced by starvation. It is linked to gene activation and may replace histone acetylation on the promoter of specific genes in response to fasting.</text>
</comment>
<comment type="PTM">
    <text evidence="2">Succinylation at Lys-80 (H3K79succ) by KAT2A takes place with a maximum frequency around the transcription start sites of genes. It gives a specific tag for epigenetic transcription activation. Desuccinylation at Lys-123 (H3K122succ) by SIRT7 in response to DNA damage promotes chromatin condensation and double-strand breaks (DSBs) repair.</text>
</comment>
<comment type="PTM">
    <text evidence="2">Serine ADP-ribosylation by PARP1 or PARP2 constitutes the primary form of ADP-ribosylation of proteins in response to DNA damage. Serine ADP-ribosylation at Ser-11 (H3S10ADPr) promotes recruitment of CHD1L. H3S10ADPr is mutually exclusive with phosphorylation at Ser-11 (H3S10ph) and impairs acetylation at Lys-10 (H3K9ac).</text>
</comment>
<comment type="PTM">
    <text evidence="33">Serotonylated by TGM2 at Gln-6 (H3Q5ser) during serotonergic neuron differentiation (PubMed:30867594). H3Q5ser is associated with trimethylation of Lys-5 (H3K4me3) and enhances general transcription factor IID (TFIID) complex-binding to H3K4me3, thereby facilitating transcription (PubMed:30867594).</text>
</comment>
<comment type="PTM">
    <text evidence="2 4">Dopaminylated by TGM2 at Gln-6 (H3Q5dop) in ventral tegmental area (VTA) neurons (By similarity). H3Q5dop mediates neurotransmission-independent role of nuclear dopamine by regulating relapse-related transcriptional plasticity in the reward system (By similarity).</text>
</comment>
<comment type="PTM">
    <text evidence="2">Lactylated in macrophages by EP300/P300 by using lactoyl-CoA directly derived from endogenous or exogenous lactate, leading to stimulates gene transcription.</text>
</comment>
<comment type="miscellaneous">
    <text>This histone is only present in mammals.</text>
</comment>
<comment type="similarity">
    <text evidence="35">Belongs to the histone H3 family.</text>
</comment>
<organism>
    <name type="scientific">Mus musculus</name>
    <name type="common">Mouse</name>
    <dbReference type="NCBI Taxonomy" id="10090"/>
    <lineage>
        <taxon>Eukaryota</taxon>
        <taxon>Metazoa</taxon>
        <taxon>Chordata</taxon>
        <taxon>Craniata</taxon>
        <taxon>Vertebrata</taxon>
        <taxon>Euteleostomi</taxon>
        <taxon>Mammalia</taxon>
        <taxon>Eutheria</taxon>
        <taxon>Euarchontoglires</taxon>
        <taxon>Glires</taxon>
        <taxon>Rodentia</taxon>
        <taxon>Myomorpha</taxon>
        <taxon>Muroidea</taxon>
        <taxon>Muridae</taxon>
        <taxon>Murinae</taxon>
        <taxon>Mus</taxon>
        <taxon>Mus</taxon>
    </lineage>
</organism>
<name>H31_MOUSE</name>
<protein>
    <recommendedName>
        <fullName>Histone H3.1</fullName>
    </recommendedName>
</protein>
<dbReference type="EMBL" id="X01684">
    <property type="protein sequence ID" value="CAA25839.1"/>
    <property type="molecule type" value="Genomic_DNA"/>
</dbReference>
<dbReference type="EMBL" id="M32460">
    <property type="protein sequence ID" value="AAA37811.1"/>
    <property type="molecule type" value="Genomic_DNA"/>
</dbReference>
<dbReference type="EMBL" id="M32462">
    <property type="protein sequence ID" value="AAA37813.1"/>
    <property type="molecule type" value="Genomic_DNA"/>
</dbReference>
<dbReference type="EMBL" id="X16496">
    <property type="protein sequence ID" value="CAA34512.1"/>
    <property type="molecule type" value="Genomic_DNA"/>
</dbReference>
<dbReference type="EMBL" id="U62670">
    <property type="protein sequence ID" value="AAB04763.1"/>
    <property type="molecule type" value="Genomic_DNA"/>
</dbReference>
<dbReference type="EMBL" id="U62672">
    <property type="protein sequence ID" value="AAB04765.1"/>
    <property type="molecule type" value="Genomic_DNA"/>
</dbReference>
<dbReference type="EMBL" id="AY158944">
    <property type="protein sequence ID" value="AAO06254.1"/>
    <property type="molecule type" value="Genomic_DNA"/>
</dbReference>
<dbReference type="EMBL" id="AY158945">
    <property type="protein sequence ID" value="AAO06255.1"/>
    <property type="molecule type" value="Genomic_DNA"/>
</dbReference>
<dbReference type="EMBL" id="AY158946">
    <property type="protein sequence ID" value="AAO06256.1"/>
    <property type="molecule type" value="Genomic_DNA"/>
</dbReference>
<dbReference type="EMBL" id="AY158952">
    <property type="protein sequence ID" value="AAO06262.1"/>
    <property type="molecule type" value="Genomic_DNA"/>
</dbReference>
<dbReference type="EMBL" id="Y12290">
    <property type="protein sequence ID" value="CAA72968.1"/>
    <property type="molecule type" value="Genomic_DNA"/>
</dbReference>
<dbReference type="EMBL" id="AK006742">
    <property type="protein sequence ID" value="BAB24722.1"/>
    <property type="molecule type" value="mRNA"/>
</dbReference>
<dbReference type="EMBL" id="AK018952">
    <property type="protein sequence ID" value="BAB31493.1"/>
    <property type="molecule type" value="mRNA"/>
</dbReference>
<dbReference type="EMBL" id="AK155722">
    <property type="protein sequence ID" value="BAE33402.1"/>
    <property type="molecule type" value="mRNA"/>
</dbReference>
<dbReference type="EMBL" id="AL589651">
    <property type="status" value="NOT_ANNOTATED_CDS"/>
    <property type="molecule type" value="Genomic_DNA"/>
</dbReference>
<dbReference type="EMBL" id="AL590388">
    <property type="status" value="NOT_ANNOTATED_CDS"/>
    <property type="molecule type" value="Genomic_DNA"/>
</dbReference>
<dbReference type="EMBL" id="BC107285">
    <property type="protein sequence ID" value="AAI07286.1"/>
    <property type="molecule type" value="mRNA"/>
</dbReference>
<dbReference type="EMBL" id="BC107287">
    <property type="protein sequence ID" value="AAI07288.1"/>
    <property type="molecule type" value="mRNA"/>
</dbReference>
<dbReference type="EMBL" id="BC115816">
    <property type="protein sequence ID" value="AAI15817.1"/>
    <property type="molecule type" value="mRNA"/>
</dbReference>
<dbReference type="EMBL" id="BC116383">
    <property type="protein sequence ID" value="AAI16384.1"/>
    <property type="molecule type" value="mRNA"/>
</dbReference>
<dbReference type="EMBL" id="BC125355">
    <property type="protein sequence ID" value="AAI25356.1"/>
    <property type="molecule type" value="mRNA"/>
</dbReference>
<dbReference type="EMBL" id="BC125357">
    <property type="protein sequence ID" value="AAI25358.1"/>
    <property type="molecule type" value="mRNA"/>
</dbReference>
<dbReference type="CCDS" id="CCDS26289.1"/>
<dbReference type="CCDS" id="CCDS26296.1"/>
<dbReference type="CCDS" id="CCDS26342.1"/>
<dbReference type="CCDS" id="CCDS26368.1"/>
<dbReference type="PIR" id="A39525">
    <property type="entry name" value="A39525"/>
</dbReference>
<dbReference type="PIR" id="S06755">
    <property type="entry name" value="S06755"/>
</dbReference>
<dbReference type="RefSeq" id="NP_038578.2">
    <property type="nucleotide sequence ID" value="NM_013550.5"/>
</dbReference>
<dbReference type="RefSeq" id="NP_659539.1">
    <property type="nucleotide sequence ID" value="NM_145073.2"/>
</dbReference>
<dbReference type="RefSeq" id="NP_835513.1">
    <property type="nucleotide sequence ID" value="NM_178206.2"/>
</dbReference>
<dbReference type="RefSeq" id="NP_835514.1">
    <property type="nucleotide sequence ID" value="NM_178207.2"/>
</dbReference>
<dbReference type="PDB" id="1GUW">
    <property type="method" value="NMR"/>
    <property type="chains" value="B=2-17"/>
</dbReference>
<dbReference type="PDB" id="1U35">
    <property type="method" value="X-ray"/>
    <property type="resolution" value="3.00 A"/>
    <property type="chains" value="A/E=1-136"/>
</dbReference>
<dbReference type="PDB" id="2V83">
    <property type="method" value="X-ray"/>
    <property type="resolution" value="2.40 A"/>
    <property type="chains" value="D/E=2-10"/>
</dbReference>
<dbReference type="PDB" id="2W5Z">
    <property type="method" value="X-ray"/>
    <property type="resolution" value="2.20 A"/>
    <property type="chains" value="C=2-9"/>
</dbReference>
<dbReference type="PDB" id="2WP1">
    <property type="method" value="X-ray"/>
    <property type="resolution" value="2.10 A"/>
    <property type="chains" value="P/Q=15-24"/>
</dbReference>
<dbReference type="PDB" id="2XL3">
    <property type="method" value="X-ray"/>
    <property type="resolution" value="2.70 A"/>
    <property type="chains" value="D/F=2-9"/>
</dbReference>
<dbReference type="PDB" id="4EZH">
    <property type="method" value="X-ray"/>
    <property type="resolution" value="2.52 A"/>
    <property type="chains" value="C/D=25-35"/>
</dbReference>
<dbReference type="PDB" id="5B1L">
    <property type="method" value="X-ray"/>
    <property type="resolution" value="2.35 A"/>
    <property type="chains" value="A/E=1-136"/>
</dbReference>
<dbReference type="PDB" id="5B1M">
    <property type="method" value="X-ray"/>
    <property type="resolution" value="2.34 A"/>
    <property type="chains" value="A/E=1-136"/>
</dbReference>
<dbReference type="PDB" id="5IX1">
    <property type="method" value="X-ray"/>
    <property type="resolution" value="2.60 A"/>
    <property type="chains" value="P/Q=2-16"/>
</dbReference>
<dbReference type="PDB" id="5IX2">
    <property type="method" value="X-ray"/>
    <property type="resolution" value="2.90 A"/>
    <property type="chains" value="P/Q=2-33"/>
</dbReference>
<dbReference type="PDB" id="7OS4">
    <property type="method" value="X-ray"/>
    <property type="resolution" value="2.54 A"/>
    <property type="chains" value="E/F/G/H=14-32"/>
</dbReference>
<dbReference type="PDB" id="7QPH">
    <property type="method" value="X-ray"/>
    <property type="resolution" value="1.90 A"/>
    <property type="chains" value="E/F/G/H=23-32"/>
</dbReference>
<dbReference type="PDB" id="7QRD">
    <property type="method" value="X-ray"/>
    <property type="resolution" value="2.00 A"/>
    <property type="chains" value="L/M=11-26"/>
</dbReference>
<dbReference type="PDB" id="7VFI">
    <property type="method" value="EM"/>
    <property type="resolution" value="3.98 A"/>
    <property type="chains" value="C=53-61"/>
</dbReference>
<dbReference type="PDBsum" id="1GUW"/>
<dbReference type="PDBsum" id="1U35"/>
<dbReference type="PDBsum" id="2V83"/>
<dbReference type="PDBsum" id="2W5Z"/>
<dbReference type="PDBsum" id="2WP1"/>
<dbReference type="PDBsum" id="2XL3"/>
<dbReference type="PDBsum" id="4EZH"/>
<dbReference type="PDBsum" id="5B1L"/>
<dbReference type="PDBsum" id="5B1M"/>
<dbReference type="PDBsum" id="5IX1"/>
<dbReference type="PDBsum" id="5IX2"/>
<dbReference type="PDBsum" id="7OS4"/>
<dbReference type="PDBsum" id="7QPH"/>
<dbReference type="PDBsum" id="7QRD"/>
<dbReference type="PDBsum" id="7VFI"/>
<dbReference type="SMR" id="P68433"/>
<dbReference type="BioGRID" id="220918">
    <property type="interactions" value="3"/>
</dbReference>
<dbReference type="BioGRID" id="237523">
    <property type="interactions" value="4"/>
</dbReference>
<dbReference type="ComplexPortal" id="CPX-5712">
    <property type="entry name" value="Nucleosome, variant H3.1-H2A.2-H2B.1"/>
</dbReference>
<dbReference type="ComplexPortal" id="CPX-5714">
    <property type="entry name" value="Nucleosome, variant H3.g-H2A.2-H2B.1"/>
</dbReference>
<dbReference type="ComplexPortal" id="CPX-5715">
    <property type="entry name" value="Nucleosome, variant H3.1-H2A.Z-H2B.1"/>
</dbReference>
<dbReference type="ComplexPortal" id="CPX-5716">
    <property type="entry name" value="Nucleosome, variant H3.1-H2A.V-H2B.1"/>
</dbReference>
<dbReference type="FunCoup" id="P68433">
    <property type="interactions" value="977"/>
</dbReference>
<dbReference type="IntAct" id="P68433">
    <property type="interactions" value="26"/>
</dbReference>
<dbReference type="MINT" id="P68433"/>
<dbReference type="STRING" id="10090.ENSMUSP00000079670"/>
<dbReference type="GlyGen" id="P68433">
    <property type="glycosylation" value="1 site, 1 O-linked glycan (1 site)"/>
</dbReference>
<dbReference type="iPTMnet" id="P68433"/>
<dbReference type="MetOSite" id="P68433"/>
<dbReference type="PhosphoSitePlus" id="P68433"/>
<dbReference type="SwissPalm" id="P68433"/>
<dbReference type="jPOST" id="P68433"/>
<dbReference type="PaxDb" id="10090-ENSMUSP00000079670"/>
<dbReference type="ProteomicsDB" id="269794"/>
<dbReference type="Pumba" id="P68433"/>
<dbReference type="TopDownProteomics" id="P68433"/>
<dbReference type="ABCD" id="P68433">
    <property type="antibodies" value="6 sequenced antibodies"/>
</dbReference>
<dbReference type="DNASU" id="319152"/>
<dbReference type="DNASU" id="319153"/>
<dbReference type="DNASU" id="360198"/>
<dbReference type="DNASU" id="97908"/>
<dbReference type="Ensembl" id="ENSMUST00000080859.8">
    <property type="protein sequence ID" value="ENSMUSP00000079670.6"/>
    <property type="gene ID" value="ENSMUSG00000099517.3"/>
</dbReference>
<dbReference type="Ensembl" id="ENSMUST00000091701.3">
    <property type="protein sequence ID" value="ENSMUSP00000089293.3"/>
    <property type="gene ID" value="ENSMUSG00000069265.3"/>
</dbReference>
<dbReference type="Ensembl" id="ENSMUST00000188775.2">
    <property type="protein sequence ID" value="ENSMUSP00000140394.2"/>
    <property type="gene ID" value="ENSMUSG00000101355.2"/>
</dbReference>
<dbReference type="Ensembl" id="ENSMUST00000189457.2">
    <property type="protein sequence ID" value="ENSMUSP00000139663.2"/>
    <property type="gene ID" value="ENSMUSG00000101972.2"/>
</dbReference>
<dbReference type="GeneID" id="319152"/>
<dbReference type="GeneID" id="319153"/>
<dbReference type="GeneID" id="360198"/>
<dbReference type="GeneID" id="97908"/>
<dbReference type="KEGG" id="mmu:319152"/>
<dbReference type="KEGG" id="mmu:319153"/>
<dbReference type="KEGG" id="mmu:360198"/>
<dbReference type="KEGG" id="mmu:97908"/>
<dbReference type="UCSC" id="uc007prc.1">
    <property type="organism name" value="mouse"/>
</dbReference>
<dbReference type="AGR" id="MGI:2145541"/>
<dbReference type="AGR" id="MGI:2448349"/>
<dbReference type="AGR" id="MGI:2448350"/>
<dbReference type="AGR" id="MGI:2668828"/>
<dbReference type="CTD" id="8350"/>
<dbReference type="CTD" id="8354"/>
<dbReference type="CTD" id="8355"/>
<dbReference type="CTD" id="8357"/>
<dbReference type="MGI" id="MGI:2668828">
    <property type="gene designation" value="H3c1"/>
</dbReference>
<dbReference type="MGI" id="MGI:2448349">
    <property type="gene designation" value="H3c10"/>
</dbReference>
<dbReference type="MGI" id="MGI:2448350">
    <property type="gene designation" value="H3c11"/>
</dbReference>
<dbReference type="MGI" id="MGI:2145541">
    <property type="gene designation" value="H3c8"/>
</dbReference>
<dbReference type="VEuPathDB" id="HostDB:ENSMUSG00000069265"/>
<dbReference type="VEuPathDB" id="HostDB:ENSMUSG00000099517"/>
<dbReference type="VEuPathDB" id="HostDB:ENSMUSG00000101355"/>
<dbReference type="VEuPathDB" id="HostDB:ENSMUSG00000101972"/>
<dbReference type="eggNOG" id="KOG1745">
    <property type="taxonomic scope" value="Eukaryota"/>
</dbReference>
<dbReference type="GeneTree" id="ENSGT01130000278271"/>
<dbReference type="HOGENOM" id="CLU_078295_4_0_1"/>
<dbReference type="InParanoid" id="P68433"/>
<dbReference type="OMA" id="FTNEMAR"/>
<dbReference type="OrthoDB" id="9609993at2759"/>
<dbReference type="PhylomeDB" id="P68433"/>
<dbReference type="TreeFam" id="TF314241"/>
<dbReference type="Reactome" id="R-MMU-1266695">
    <property type="pathway name" value="Interleukin-7 signaling"/>
</dbReference>
<dbReference type="Reactome" id="R-MMU-212300">
    <property type="pathway name" value="PRC2 methylates histones and DNA"/>
</dbReference>
<dbReference type="Reactome" id="R-MMU-2299718">
    <property type="pathway name" value="Condensation of Prophase Chromosomes"/>
</dbReference>
<dbReference type="Reactome" id="R-MMU-3214815">
    <property type="pathway name" value="HDACs deacetylate histones"/>
</dbReference>
<dbReference type="Reactome" id="R-MMU-3214841">
    <property type="pathway name" value="PKMTs methylate histone lysines"/>
</dbReference>
<dbReference type="Reactome" id="R-MMU-3214842">
    <property type="pathway name" value="HDMs demethylate histones"/>
</dbReference>
<dbReference type="Reactome" id="R-MMU-3214847">
    <property type="pathway name" value="HATs acetylate histones"/>
</dbReference>
<dbReference type="Reactome" id="R-MMU-3214858">
    <property type="pathway name" value="RMTs methylate histone arginines"/>
</dbReference>
<dbReference type="Reactome" id="R-MMU-3247509">
    <property type="pathway name" value="Chromatin modifying enzymes"/>
</dbReference>
<dbReference type="Reactome" id="R-MMU-8936459">
    <property type="pathway name" value="RUNX1 regulates genes involved in megakaryocyte differentiation and platelet function"/>
</dbReference>
<dbReference type="Reactome" id="R-MMU-9018519">
    <property type="pathway name" value="Estrogen-dependent gene expression"/>
</dbReference>
<dbReference type="Reactome" id="R-MMU-983231">
    <property type="pathway name" value="Factors involved in megakaryocyte development and platelet production"/>
</dbReference>
<dbReference type="Reactome" id="R-MMU-9841922">
    <property type="pathway name" value="MLL4 and MLL3 complexes regulate expression of PPARG target genes in adipogenesis and hepatic steatosis"/>
</dbReference>
<dbReference type="Reactome" id="R-MMU-9843940">
    <property type="pathway name" value="Regulation of endogenous retroelements by KRAB-ZFP proteins"/>
</dbReference>
<dbReference type="BioGRID-ORCS" id="319152">
    <property type="hits" value="11 hits in 41 CRISPR screens"/>
</dbReference>
<dbReference type="BioGRID-ORCS" id="319153">
    <property type="hits" value="10 hits in 41 CRISPR screens"/>
</dbReference>
<dbReference type="BioGRID-ORCS" id="360198">
    <property type="hits" value="11 hits in 45 CRISPR screens"/>
</dbReference>
<dbReference type="BioGRID-ORCS" id="97908">
    <property type="hits" value="14 hits in 43 CRISPR screens"/>
</dbReference>
<dbReference type="CD-CODE" id="DE1E139C">
    <property type="entry name" value="Chromatoid body"/>
</dbReference>
<dbReference type="ChiTaRS" id="Zfp106">
    <property type="organism name" value="mouse"/>
</dbReference>
<dbReference type="EvolutionaryTrace" id="P68433"/>
<dbReference type="PRO" id="PR:P68433"/>
<dbReference type="Proteomes" id="UP000000589">
    <property type="component" value="Chromosome 13"/>
</dbReference>
<dbReference type="RNAct" id="P68433">
    <property type="molecule type" value="protein"/>
</dbReference>
<dbReference type="Bgee" id="ENSMUSG00000069265">
    <property type="expression patterns" value="Expressed in uterus and 55 other cell types or tissues"/>
</dbReference>
<dbReference type="GO" id="GO:0005654">
    <property type="term" value="C:nucleoplasm"/>
    <property type="evidence" value="ECO:0000304"/>
    <property type="project" value="Reactome"/>
</dbReference>
<dbReference type="GO" id="GO:0000786">
    <property type="term" value="C:nucleosome"/>
    <property type="evidence" value="ECO:0000266"/>
    <property type="project" value="ComplexPortal"/>
</dbReference>
<dbReference type="GO" id="GO:0005634">
    <property type="term" value="C:nucleus"/>
    <property type="evidence" value="ECO:0000250"/>
    <property type="project" value="UniProtKB"/>
</dbReference>
<dbReference type="GO" id="GO:0003677">
    <property type="term" value="F:DNA binding"/>
    <property type="evidence" value="ECO:0007669"/>
    <property type="project" value="UniProtKB-KW"/>
</dbReference>
<dbReference type="GO" id="GO:0046982">
    <property type="term" value="F:protein heterodimerization activity"/>
    <property type="evidence" value="ECO:0007669"/>
    <property type="project" value="InterPro"/>
</dbReference>
<dbReference type="GO" id="GO:0030527">
    <property type="term" value="F:structural constituent of chromatin"/>
    <property type="evidence" value="ECO:0007669"/>
    <property type="project" value="InterPro"/>
</dbReference>
<dbReference type="GO" id="GO:0006325">
    <property type="term" value="P:chromatin organization"/>
    <property type="evidence" value="ECO:0000303"/>
    <property type="project" value="ComplexPortal"/>
</dbReference>
<dbReference type="CDD" id="cd22911">
    <property type="entry name" value="HFD_H3"/>
    <property type="match status" value="1"/>
</dbReference>
<dbReference type="FunFam" id="1.10.20.10:FF:000078">
    <property type="entry name" value="Histone H3"/>
    <property type="match status" value="1"/>
</dbReference>
<dbReference type="FunFam" id="1.10.20.10:FF:000044">
    <property type="entry name" value="Histone H3.3"/>
    <property type="match status" value="1"/>
</dbReference>
<dbReference type="Gene3D" id="1.10.20.10">
    <property type="entry name" value="Histone, subunit A"/>
    <property type="match status" value="1"/>
</dbReference>
<dbReference type="InterPro" id="IPR009072">
    <property type="entry name" value="Histone-fold"/>
</dbReference>
<dbReference type="InterPro" id="IPR007125">
    <property type="entry name" value="Histone_H2A/H2B/H3"/>
</dbReference>
<dbReference type="InterPro" id="IPR000164">
    <property type="entry name" value="Histone_H3/CENP-A"/>
</dbReference>
<dbReference type="PANTHER" id="PTHR11426">
    <property type="entry name" value="HISTONE H3"/>
    <property type="match status" value="1"/>
</dbReference>
<dbReference type="Pfam" id="PF00125">
    <property type="entry name" value="Histone"/>
    <property type="match status" value="1"/>
</dbReference>
<dbReference type="PRINTS" id="PR00622">
    <property type="entry name" value="HISTONEH3"/>
</dbReference>
<dbReference type="SMART" id="SM00428">
    <property type="entry name" value="H3"/>
    <property type="match status" value="1"/>
</dbReference>
<dbReference type="SUPFAM" id="SSF47113">
    <property type="entry name" value="Histone-fold"/>
    <property type="match status" value="1"/>
</dbReference>
<dbReference type="PROSITE" id="PS00322">
    <property type="entry name" value="HISTONE_H3_1"/>
    <property type="match status" value="1"/>
</dbReference>
<dbReference type="PROSITE" id="PS00959">
    <property type="entry name" value="HISTONE_H3_2"/>
    <property type="match status" value="1"/>
</dbReference>
<sequence length="136" mass="15404">MARTKQTARKSTGGKAPRKQLATKAARKSAPATGGVKKPHRYRPGTVALREIRRYQKSTELLIRKLPFQRLVREIAQDFKTDLRFQSSAVMALQEACEAYLVGLFEDTNLCAIHAKRVTIMPKDIQLARRIRGERA</sequence>
<reference key="1">
    <citation type="journal article" date="1983" name="Nucleic Acids Res.">
        <title>Structure of a cluster of mouse histone genes.</title>
        <authorList>
            <person name="Sittman D.B."/>
            <person name="Graves R.A."/>
            <person name="Marzluff W.F."/>
        </authorList>
    </citation>
    <scope>NUCLEOTIDE SEQUENCE [GENOMIC DNA]</scope>
</reference>
<reference key="2">
    <citation type="journal article" date="1986" name="J. Mol. Evol.">
        <title>Sequences of four mouse histone H3 genes: implications for evolution of mouse histone genes.</title>
        <authorList>
            <person name="Taylor J.D."/>
            <person name="Wellman S.E."/>
            <person name="Marzluff W.F."/>
        </authorList>
    </citation>
    <scope>NUCLEOTIDE SEQUENCE [GENOMIC DNA] (H3C8 AND H3C10)</scope>
</reference>
<reference key="3">
    <citation type="journal article" date="1989" name="Nucleic Acids Res.">
        <title>Nucleotide sequences of mouse histone genes H2A and H3.1.</title>
        <authorList>
            <person name="Kosciessa U."/>
            <person name="Doenecke D."/>
        </authorList>
    </citation>
    <scope>NUCLEOTIDE SEQUENCE [GENOMIC DNA]</scope>
    <source>
        <strain>CD-1</strain>
        <tissue>Testis</tissue>
    </source>
</reference>
<reference key="4">
    <citation type="journal article" date="1996" name="Genome Res.">
        <title>Characterization of the mouse histone gene cluster on chromosome 13: 45 histone genes in three patches spread over 1Mb.</title>
        <authorList>
            <person name="Wang Z.-F."/>
            <person name="Krasikov T."/>
            <person name="Frey M.R."/>
            <person name="Wang J."/>
            <person name="Matera A.G."/>
            <person name="Marzluff W.F."/>
        </authorList>
    </citation>
    <scope>NUCLEOTIDE SEQUENCE [GENOMIC DNA] (H3C11)</scope>
    <source>
        <strain>C57BL/CJ6</strain>
    </source>
</reference>
<reference key="5">
    <citation type="journal article" date="2002" name="Genomics">
        <title>The human and mouse replication-dependent histone genes.</title>
        <authorList>
            <person name="Marzluff W.F."/>
            <person name="Gongidi P."/>
            <person name="Woods K.R."/>
            <person name="Jin J."/>
            <person name="Maltais L.J."/>
        </authorList>
    </citation>
    <scope>NUCLEOTIDE SEQUENCE [GENOMIC DNA] (H3C1; H3C8; H3C10 AND H3C11)</scope>
</reference>
<reference key="6">
    <citation type="submission" date="1997-04" db="EMBL/GenBank/DDBJ databases">
        <authorList>
            <person name="Franke K."/>
            <person name="Drabent B."/>
            <person name="Doenecke D."/>
        </authorList>
    </citation>
    <scope>NUCLEOTIDE SEQUENCE [GENOMIC DNA]</scope>
    <source>
        <strain>129/Sv</strain>
    </source>
</reference>
<reference key="7">
    <citation type="journal article" date="2005" name="Science">
        <title>The transcriptional landscape of the mammalian genome.</title>
        <authorList>
            <person name="Carninci P."/>
            <person name="Kasukawa T."/>
            <person name="Katayama S."/>
            <person name="Gough J."/>
            <person name="Frith M.C."/>
            <person name="Maeda N."/>
            <person name="Oyama R."/>
            <person name="Ravasi T."/>
            <person name="Lenhard B."/>
            <person name="Wells C."/>
            <person name="Kodzius R."/>
            <person name="Shimokawa K."/>
            <person name="Bajic V.B."/>
            <person name="Brenner S.E."/>
            <person name="Batalov S."/>
            <person name="Forrest A.R."/>
            <person name="Zavolan M."/>
            <person name="Davis M.J."/>
            <person name="Wilming L.G."/>
            <person name="Aidinis V."/>
            <person name="Allen J.E."/>
            <person name="Ambesi-Impiombato A."/>
            <person name="Apweiler R."/>
            <person name="Aturaliya R.N."/>
            <person name="Bailey T.L."/>
            <person name="Bansal M."/>
            <person name="Baxter L."/>
            <person name="Beisel K.W."/>
            <person name="Bersano T."/>
            <person name="Bono H."/>
            <person name="Chalk A.M."/>
            <person name="Chiu K.P."/>
            <person name="Choudhary V."/>
            <person name="Christoffels A."/>
            <person name="Clutterbuck D.R."/>
            <person name="Crowe M.L."/>
            <person name="Dalla E."/>
            <person name="Dalrymple B.P."/>
            <person name="de Bono B."/>
            <person name="Della Gatta G."/>
            <person name="di Bernardo D."/>
            <person name="Down T."/>
            <person name="Engstrom P."/>
            <person name="Fagiolini M."/>
            <person name="Faulkner G."/>
            <person name="Fletcher C.F."/>
            <person name="Fukushima T."/>
            <person name="Furuno M."/>
            <person name="Futaki S."/>
            <person name="Gariboldi M."/>
            <person name="Georgii-Hemming P."/>
            <person name="Gingeras T.R."/>
            <person name="Gojobori T."/>
            <person name="Green R.E."/>
            <person name="Gustincich S."/>
            <person name="Harbers M."/>
            <person name="Hayashi Y."/>
            <person name="Hensch T.K."/>
            <person name="Hirokawa N."/>
            <person name="Hill D."/>
            <person name="Huminiecki L."/>
            <person name="Iacono M."/>
            <person name="Ikeo K."/>
            <person name="Iwama A."/>
            <person name="Ishikawa T."/>
            <person name="Jakt M."/>
            <person name="Kanapin A."/>
            <person name="Katoh M."/>
            <person name="Kawasawa Y."/>
            <person name="Kelso J."/>
            <person name="Kitamura H."/>
            <person name="Kitano H."/>
            <person name="Kollias G."/>
            <person name="Krishnan S.P."/>
            <person name="Kruger A."/>
            <person name="Kummerfeld S.K."/>
            <person name="Kurochkin I.V."/>
            <person name="Lareau L.F."/>
            <person name="Lazarevic D."/>
            <person name="Lipovich L."/>
            <person name="Liu J."/>
            <person name="Liuni S."/>
            <person name="McWilliam S."/>
            <person name="Madan Babu M."/>
            <person name="Madera M."/>
            <person name="Marchionni L."/>
            <person name="Matsuda H."/>
            <person name="Matsuzawa S."/>
            <person name="Miki H."/>
            <person name="Mignone F."/>
            <person name="Miyake S."/>
            <person name="Morris K."/>
            <person name="Mottagui-Tabar S."/>
            <person name="Mulder N."/>
            <person name="Nakano N."/>
            <person name="Nakauchi H."/>
            <person name="Ng P."/>
            <person name="Nilsson R."/>
            <person name="Nishiguchi S."/>
            <person name="Nishikawa S."/>
            <person name="Nori F."/>
            <person name="Ohara O."/>
            <person name="Okazaki Y."/>
            <person name="Orlando V."/>
            <person name="Pang K.C."/>
            <person name="Pavan W.J."/>
            <person name="Pavesi G."/>
            <person name="Pesole G."/>
            <person name="Petrovsky N."/>
            <person name="Piazza S."/>
            <person name="Reed J."/>
            <person name="Reid J.F."/>
            <person name="Ring B.Z."/>
            <person name="Ringwald M."/>
            <person name="Rost B."/>
            <person name="Ruan Y."/>
            <person name="Salzberg S.L."/>
            <person name="Sandelin A."/>
            <person name="Schneider C."/>
            <person name="Schoenbach C."/>
            <person name="Sekiguchi K."/>
            <person name="Semple C.A."/>
            <person name="Seno S."/>
            <person name="Sessa L."/>
            <person name="Sheng Y."/>
            <person name="Shibata Y."/>
            <person name="Shimada H."/>
            <person name="Shimada K."/>
            <person name="Silva D."/>
            <person name="Sinclair B."/>
            <person name="Sperling S."/>
            <person name="Stupka E."/>
            <person name="Sugiura K."/>
            <person name="Sultana R."/>
            <person name="Takenaka Y."/>
            <person name="Taki K."/>
            <person name="Tammoja K."/>
            <person name="Tan S.L."/>
            <person name="Tang S."/>
            <person name="Taylor M.S."/>
            <person name="Tegner J."/>
            <person name="Teichmann S.A."/>
            <person name="Ueda H.R."/>
            <person name="van Nimwegen E."/>
            <person name="Verardo R."/>
            <person name="Wei C.L."/>
            <person name="Yagi K."/>
            <person name="Yamanishi H."/>
            <person name="Zabarovsky E."/>
            <person name="Zhu S."/>
            <person name="Zimmer A."/>
            <person name="Hide W."/>
            <person name="Bult C."/>
            <person name="Grimmond S.M."/>
            <person name="Teasdale R.D."/>
            <person name="Liu E.T."/>
            <person name="Brusic V."/>
            <person name="Quackenbush J."/>
            <person name="Wahlestedt C."/>
            <person name="Mattick J.S."/>
            <person name="Hume D.A."/>
            <person name="Kai C."/>
            <person name="Sasaki D."/>
            <person name="Tomaru Y."/>
            <person name="Fukuda S."/>
            <person name="Kanamori-Katayama M."/>
            <person name="Suzuki M."/>
            <person name="Aoki J."/>
            <person name="Arakawa T."/>
            <person name="Iida J."/>
            <person name="Imamura K."/>
            <person name="Itoh M."/>
            <person name="Kato T."/>
            <person name="Kawaji H."/>
            <person name="Kawagashira N."/>
            <person name="Kawashima T."/>
            <person name="Kojima M."/>
            <person name="Kondo S."/>
            <person name="Konno H."/>
            <person name="Nakano K."/>
            <person name="Ninomiya N."/>
            <person name="Nishio T."/>
            <person name="Okada M."/>
            <person name="Plessy C."/>
            <person name="Shibata K."/>
            <person name="Shiraki T."/>
            <person name="Suzuki S."/>
            <person name="Tagami M."/>
            <person name="Waki K."/>
            <person name="Watahiki A."/>
            <person name="Okamura-Oho Y."/>
            <person name="Suzuki H."/>
            <person name="Kawai J."/>
            <person name="Hayashizaki Y."/>
        </authorList>
    </citation>
    <scope>NUCLEOTIDE SEQUENCE [LARGE SCALE MRNA]</scope>
    <source>
        <strain>C57BL/6J</strain>
        <tissue>Testis</tissue>
    </source>
</reference>
<reference key="8">
    <citation type="journal article" date="2009" name="PLoS Biol.">
        <title>Lineage-specific biology revealed by a finished genome assembly of the mouse.</title>
        <authorList>
            <person name="Church D.M."/>
            <person name="Goodstadt L."/>
            <person name="Hillier L.W."/>
            <person name="Zody M.C."/>
            <person name="Goldstein S."/>
            <person name="She X."/>
            <person name="Bult C.J."/>
            <person name="Agarwala R."/>
            <person name="Cherry J.L."/>
            <person name="DiCuccio M."/>
            <person name="Hlavina W."/>
            <person name="Kapustin Y."/>
            <person name="Meric P."/>
            <person name="Maglott D."/>
            <person name="Birtle Z."/>
            <person name="Marques A.C."/>
            <person name="Graves T."/>
            <person name="Zhou S."/>
            <person name="Teague B."/>
            <person name="Potamousis K."/>
            <person name="Churas C."/>
            <person name="Place M."/>
            <person name="Herschleb J."/>
            <person name="Runnheim R."/>
            <person name="Forrest D."/>
            <person name="Amos-Landgraf J."/>
            <person name="Schwartz D.C."/>
            <person name="Cheng Z."/>
            <person name="Lindblad-Toh K."/>
            <person name="Eichler E.E."/>
            <person name="Ponting C.P."/>
        </authorList>
    </citation>
    <scope>NUCLEOTIDE SEQUENCE [LARGE SCALE GENOMIC DNA]</scope>
    <source>
        <strain>C57BL/6J</strain>
    </source>
</reference>
<reference key="9">
    <citation type="journal article" date="2004" name="Genome Res.">
        <title>The status, quality, and expansion of the NIH full-length cDNA project: the Mammalian Gene Collection (MGC).</title>
        <authorList>
            <consortium name="The MGC Project Team"/>
        </authorList>
    </citation>
    <scope>NUCLEOTIDE SEQUENCE [LARGE SCALE MRNA]</scope>
</reference>
<reference key="10">
    <citation type="submission" date="2009-01" db="UniProtKB">
        <authorList>
            <person name="Lubec G."/>
            <person name="Sunyer B."/>
            <person name="Chen W.-Q."/>
        </authorList>
    </citation>
    <scope>PROTEIN SEQUENCE OF 58-64</scope>
    <scope>IDENTIFICATION BY MASS SPECTROMETRY</scope>
    <source>
        <strain>OF1</strain>
        <tissue>Hippocampus</tissue>
    </source>
</reference>
<reference key="11">
    <citation type="journal article" date="1985" name="Mol. Cell. Biol.">
        <title>Changes in the levels of three different classes of histone mRNA during murine erythroleukemia cell differentiation.</title>
        <authorList>
            <person name="Brown D.T."/>
            <person name="Wellman S.E."/>
            <person name="Sittman D.B."/>
        </authorList>
    </citation>
    <scope>DEVELOPMENTAL STAGE</scope>
</reference>
<reference key="12">
    <citation type="journal article" date="1999" name="J. Biol. Chem.">
        <title>Identification of a novel phosphorylation site on histone H3 coupled with mitotic chromosome condensation.</title>
        <authorList>
            <person name="Goto H."/>
            <person name="Tomono Y."/>
            <person name="Ajiro K."/>
            <person name="Kosako H."/>
            <person name="Fujita M."/>
            <person name="Sakurai M."/>
            <person name="Okawa K."/>
            <person name="Iwamatsu A."/>
            <person name="Okigaki T."/>
            <person name="Takahashi T."/>
            <person name="Inagaki M."/>
        </authorList>
    </citation>
    <scope>PHOSPHORYLATION AT SER-11 AND SER-29</scope>
</reference>
<reference key="13">
    <citation type="journal article" date="2001" name="Curr. Biol.">
        <title>Hormone-dependent, CARM1-directed, arginine-specific methylation of histone H3 on a steroid-regulated promoter.</title>
        <authorList>
            <person name="Ma H."/>
            <person name="Baumann C.T."/>
            <person name="Li H."/>
            <person name="Strahl B.D."/>
            <person name="Rice R."/>
            <person name="Jelinek M.A."/>
            <person name="Aswad D.W."/>
            <person name="Allis C.D."/>
            <person name="Hager G.L."/>
            <person name="Stallcup M.R."/>
        </authorList>
    </citation>
    <scope>METHYLATION AT LYS-5 AND ARG-18</scope>
</reference>
<reference key="14">
    <citation type="journal article" date="2001" name="J. Biol. Chem.">
        <title>Ultraviolet B-induced phosphorylation of histone H3 at serine 28 is mediated by MSK1.</title>
        <authorList>
            <person name="Zhong S."/>
            <person name="Jansen C."/>
            <person name="She Q.-B."/>
            <person name="Goto H."/>
            <person name="Inagaki M."/>
            <person name="Bode A.M."/>
            <person name="Ma W.-Y."/>
            <person name="Dong Z."/>
        </authorList>
    </citation>
    <scope>PHOSPHORYLATION AT SER-29</scope>
</reference>
<reference key="15">
    <citation type="journal article" date="2002" name="Curr. Biol.">
        <title>Crosstalk between CARM1 methylation and CBP acetylation on histone H3.</title>
        <authorList>
            <person name="Daujat S."/>
            <person name="Bauer U.-M."/>
            <person name="Shah V."/>
            <person name="Turner B."/>
            <person name="Berger S."/>
            <person name="Kouzarides T."/>
        </authorList>
    </citation>
    <scope>ACETYLATION AT LYS-15; LYS-19 AND LYS-24</scope>
    <scope>METHYLATION AT ARG-18</scope>
</reference>
<reference key="16">
    <citation type="journal article" date="2002" name="EMBO Rep.">
        <title>Methylation at arginine 17 of histone H3 is linked to gene activation.</title>
        <authorList>
            <person name="Bauer U.-M."/>
            <person name="Daujat S."/>
            <person name="Nielsen S.J."/>
            <person name="Nightingale K."/>
            <person name="Kouzarides T."/>
        </authorList>
    </citation>
    <scope>METHYLATION AT ARG-18</scope>
</reference>
<reference key="17">
    <citation type="journal article" date="2002" name="Genes Cells">
        <title>Aurora-B phosphorylates Histone H3 at serine28 with regard to the mitotic chromosome condensation.</title>
        <authorList>
            <person name="Goto H."/>
            <person name="Yasui Y."/>
            <person name="Nigg E.A."/>
            <person name="Inagaki M."/>
        </authorList>
    </citation>
    <scope>PHOSPHORYLATION AT SER-11 AND SER-29</scope>
</reference>
<reference key="18">
    <citation type="journal article" date="2003" name="J. Protein Chem.">
        <title>Identification of methylation and acetylation sites on mouse histone H3 using matrix-assisted laser desorption/ionization time-of-flight and nanoelectrospray ionization tandem mass spectrometry.</title>
        <authorList>
            <person name="Cocklin R.R."/>
            <person name="Wang M."/>
        </authorList>
    </citation>
    <scope>ACETYLATION AT LYS-15; LYS-19 AND LYS-24</scope>
    <scope>METHYLATION AT LYS-10; LYS-28; LYS-37; LYS-80 AND LYS-123</scope>
    <scope>IDENTIFICATION BY MASS SPECTROMETRY</scope>
</reference>
<reference key="19">
    <citation type="journal article" date="2004" name="Cell">
        <title>Histone deimination antagonizes arginine methylation.</title>
        <authorList>
            <person name="Cuthbert G.L."/>
            <person name="Daujat S."/>
            <person name="Snowden A.W."/>
            <person name="Erdjument-Bromage H."/>
            <person name="Hagiwara T."/>
            <person name="Yamada M."/>
            <person name="Schneider R."/>
            <person name="Gregory P.D."/>
            <person name="Tempst P."/>
            <person name="Bannister A.J."/>
            <person name="Kouzarides T."/>
        </authorList>
    </citation>
    <scope>CITRULLINATION AT ARG-3; ARG-9; ARG-18 AND ARG-27</scope>
</reference>
<reference key="20">
    <citation type="journal article" date="2004" name="Mol. Cell. Biol.">
        <title>Human SWI/SNF-associated PRMT5 methylates histone H3 arginine 8 and negatively regulates expression of ST7 and NM23 tumor suppressor genes.</title>
        <authorList>
            <person name="Pal S."/>
            <person name="Vishwanath S.N."/>
            <person name="Erdjument-Bromage H."/>
            <person name="Tempst P."/>
            <person name="Sif S."/>
        </authorList>
    </citation>
    <scope>METHYLATION AT ARG-9</scope>
    <scope>ACETYLATION AT LYS-10</scope>
</reference>
<reference key="21">
    <citation type="journal article" date="2005" name="EMBO J.">
        <title>Arginine methyltransferase CARM1 is a promoter-specific regulator of NF-kappaB-dependent gene expression.</title>
        <authorList>
            <person name="Covic M."/>
            <person name="Hassa P.O."/>
            <person name="Saccani S."/>
            <person name="Buerki C."/>
            <person name="Meier N.I."/>
            <person name="Lombardi C."/>
            <person name="Imhof R."/>
            <person name="Bedford M.T."/>
            <person name="Natoli G."/>
            <person name="Hottiger M.O."/>
        </authorList>
    </citation>
    <scope>METHYLATION AT ARG-18</scope>
</reference>
<reference key="22">
    <citation type="journal article" date="2005" name="Genes Dev.">
        <title>The kinase haspin is required for mitotic histone H3 Thr 3 phosphorylation and normal metaphase chromosome alignment.</title>
        <authorList>
            <person name="Dai J."/>
            <person name="Sultan S."/>
            <person name="Taylor S.S."/>
            <person name="Higgins J.M.G."/>
        </authorList>
    </citation>
    <scope>PHOSPHORYLATION AT THR-4 AND SER-11</scope>
</reference>
<reference key="23">
    <citation type="journal article" date="2005" name="J. Biol. Chem.">
        <title>Phosphorylation of Ser28 in histone H3 mediated by mixed lineage kinase-like mitogen-activated protein triple kinase alpha.</title>
        <authorList>
            <person name="Choi H.S."/>
            <person name="Choi B.Y."/>
            <person name="Cho Y.-Y."/>
            <person name="Zhu F."/>
            <person name="Bode A.M."/>
            <person name="Dong Z."/>
        </authorList>
    </citation>
    <scope>PHOSPHORYLATION AT SER-29</scope>
</reference>
<reference key="24">
    <citation type="journal article" date="2005" name="J. Cell Sci.">
        <title>MAP kinase-mediated phosphorylation of distinct pools of histone H3 at S10 or S28 via mitogen- and stress-activated kinase 1/2.</title>
        <authorList>
            <person name="Dyson M.H."/>
            <person name="Thomson S."/>
            <person name="Inagaki M."/>
            <person name="Goto H."/>
            <person name="Arthur S.J."/>
            <person name="Nightingale K."/>
            <person name="Iborra F.J."/>
            <person name="Mahadevan L.C."/>
        </authorList>
    </citation>
    <scope>PHOSPHORYLATION AT SER-11 AND SER-29</scope>
</reference>
<reference key="25">
    <citation type="journal article" date="2005" name="Oncogene">
        <title>Stimulation of the Ras-MAPK pathway leads to independent phosphorylation of histone H3 on serine 10 and 28.</title>
        <authorList>
            <person name="Dunn K.L."/>
            <person name="Davie J.R."/>
        </authorList>
    </citation>
    <scope>PHOSPHORYLATION AT SER-11 AND SER-29</scope>
</reference>
<reference key="26">
    <citation type="journal article" date="2007" name="J. Biol. Chem.">
        <title>Organismal differences in post-translational modifications in histones H3 and H4.</title>
        <authorList>
            <person name="Garcia B.A."/>
            <person name="Hake S.B."/>
            <person name="Diaz R.L."/>
            <person name="Kauer M."/>
            <person name="Morris S.A."/>
            <person name="Recht J."/>
            <person name="Shabanowitz J."/>
            <person name="Mishra N."/>
            <person name="Strahl B.D."/>
            <person name="Allis C.D."/>
            <person name="Hunt D.F."/>
        </authorList>
    </citation>
    <scope>ACETYLATION AT LYS-5; LYS-10; LYS-15; LYS-19; LYS-24 AND LYS-28</scope>
    <scope>METHYLATION AT LYS-5; LYS-10; LYS-19; LYS-24; LYS-28; LYS-37 AND LYS-80</scope>
    <scope>IDENTIFICATION BY MASS SPECTROMETRY</scope>
</reference>
<reference key="27">
    <citation type="journal article" date="2007" name="J. Biol. Chem.">
        <title>Identification of histone H3 lysine 36 acetylation as a highly conserved histone modification.</title>
        <authorList>
            <person name="Morris S.A."/>
            <person name="Rao B."/>
            <person name="Garcia B.A."/>
            <person name="Hake S.B."/>
            <person name="Diaz R.L."/>
            <person name="Shabanowitz J."/>
            <person name="Hunt D.F."/>
            <person name="Allis C.D."/>
            <person name="Lieb J.D."/>
            <person name="Strahl B.D."/>
        </authorList>
    </citation>
    <scope>ACETYLATION AT LYS-37</scope>
</reference>
<reference key="28">
    <citation type="journal article" date="2008" name="Cell">
        <title>Chk1 is a histone H3 threonine 11 kinase that regulates DNA damage-induced transcriptional repression.</title>
        <authorList>
            <person name="Shimada M."/>
            <person name="Niida H."/>
            <person name="Zineldeen D.H."/>
            <person name="Tagami H."/>
            <person name="Tanaka M."/>
            <person name="Saito H."/>
            <person name="Nakanishi M."/>
        </authorList>
    </citation>
    <scope>PHOSPHORYLATION AT THR-12 BY CHEK1</scope>
</reference>
<reference key="29">
    <citation type="journal article" date="2010" name="Mol. Cell">
        <title>The RING domain of RAG1 ubiquitylates histone H3: a novel activity in chromatin-mediated regulation of V(D)J joining.</title>
        <authorList>
            <person name="Grazini U."/>
            <person name="Zanardi F."/>
            <person name="Citterio E."/>
            <person name="Casola S."/>
            <person name="Goding C.R."/>
            <person name="McBlane F."/>
        </authorList>
    </citation>
    <scope>UBIQUITINATION</scope>
</reference>
<reference key="30">
    <citation type="journal article" date="2011" name="Cell">
        <title>Identification of 67 histone marks and histone lysine crotonylation as a new type of histone modification.</title>
        <authorList>
            <person name="Tan M."/>
            <person name="Luo H."/>
            <person name="Lee S."/>
            <person name="Jin F."/>
            <person name="Yang J.S."/>
            <person name="Montellier E."/>
            <person name="Buchou T."/>
            <person name="Cheng Z."/>
            <person name="Rousseaux S."/>
            <person name="Rajagopal N."/>
            <person name="Lu Z."/>
            <person name="Ye Z."/>
            <person name="Zhu Q."/>
            <person name="Wysocka J."/>
            <person name="Ye Y."/>
            <person name="Khochbin S."/>
            <person name="Ren B."/>
            <person name="Zhao Y."/>
        </authorList>
    </citation>
    <scope>CROTONYLATION AT LYS-5; LYS-10; LYS-19; LYS-24; LYS-28 AND LYS-57</scope>
</reference>
<reference key="31">
    <citation type="journal article" date="2012" name="Mol. Cell. Proteomics">
        <title>Lysine succinylation and lysine malonylation in histones.</title>
        <authorList>
            <person name="Xie Z."/>
            <person name="Dai J."/>
            <person name="Dai L."/>
            <person name="Tan M."/>
            <person name="Cheng Z."/>
            <person name="Wu Y."/>
            <person name="Boeke J.D."/>
            <person name="Zhao Y."/>
        </authorList>
    </citation>
    <scope>SUCCINYLATION AT LYS-57 AND LYS-80</scope>
</reference>
<reference key="32">
    <citation type="journal article" date="2014" name="Nat. Chem. Biol.">
        <title>Lysine 2-hydroxyisobutyrylation is a widely distributed active histone mark.</title>
        <authorList>
            <person name="Dai L."/>
            <person name="Peng C."/>
            <person name="Montellier E."/>
            <person name="Lu Z."/>
            <person name="Chen Y."/>
            <person name="Ishii H."/>
            <person name="Debernardi A."/>
            <person name="Buchou T."/>
            <person name="Rousseaux S."/>
            <person name="Jin F."/>
            <person name="Sabari B.R."/>
            <person name="Deng Z."/>
            <person name="Allis C.D."/>
            <person name="Ren B."/>
            <person name="Khochbin S."/>
            <person name="Zhao Y."/>
        </authorList>
    </citation>
    <scope>HYDROXYBUTYRYLATION AT LYS-5; LYS-10; LYS-15; LYS-19; LYS-24; LYS-28; LYS-37; LYS-57; LYS-65; LYS-80 AND LYS-123</scope>
</reference>
<reference key="33">
    <citation type="journal article" date="2016" name="Mol. Cell">
        <title>Dynamic competing histone H4 K5K8 acetylation and butyrylation are hallmarks of highly active gene promoters.</title>
        <authorList>
            <person name="Goudarzi A."/>
            <person name="Zhang D."/>
            <person name="Huang H."/>
            <person name="Barral S."/>
            <person name="Kwon O.K."/>
            <person name="Qi S."/>
            <person name="Tang Z."/>
            <person name="Buchou T."/>
            <person name="Vitte A.L."/>
            <person name="He T."/>
            <person name="Cheng Z."/>
            <person name="Montellier E."/>
            <person name="Gaucher J."/>
            <person name="Curtet S."/>
            <person name="Debernardi A."/>
            <person name="Charbonnier G."/>
            <person name="Puthier D."/>
            <person name="Petosa C."/>
            <person name="Panne D."/>
            <person name="Rousseaux S."/>
            <person name="Roeder R.G."/>
            <person name="Zhao Y."/>
            <person name="Khochbin S."/>
        </authorList>
    </citation>
    <scope>BUTYRYLATION AT LYS-19; LYS-24; LYS-28; LYS-37; LYS-38; LYS-80 AND LYS-123</scope>
</reference>
<reference key="34">
    <citation type="journal article" date="2016" name="Mol. Cell">
        <title>Metabolic regulation of gene expression by histone lysine beta-hydroxybutyrylation.</title>
        <authorList>
            <person name="Xie Z."/>
            <person name="Zhang D."/>
            <person name="Chung D."/>
            <person name="Tang Z."/>
            <person name="Huang H."/>
            <person name="Dai L."/>
            <person name="Qi S."/>
            <person name="Li J."/>
            <person name="Colak G."/>
            <person name="Chen Y."/>
            <person name="Xia C."/>
            <person name="Peng C."/>
            <person name="Ruan H."/>
            <person name="Kirkey M."/>
            <person name="Wang D."/>
            <person name="Jensen L.M."/>
            <person name="Kwon O.K."/>
            <person name="Lee S."/>
            <person name="Pletcher S.D."/>
            <person name="Tan M."/>
            <person name="Lombard D.B."/>
            <person name="White K.P."/>
            <person name="Zhao H."/>
            <person name="Li J."/>
            <person name="Roeder R.G."/>
            <person name="Yang X."/>
            <person name="Zhao Y."/>
        </authorList>
    </citation>
    <scope>HYDROXYBUTYRYLATION AT LYS-5; LYS-10; LYS-15; LYS-19; LYS-24 AND LYS-57</scope>
</reference>
<reference key="35">
    <citation type="journal article" date="2018" name="Sci. Rep.">
        <title>Histone deacetylase (HDAC) 1 and 2 complexes regulate both histone acetylation and crotonylation in vivo.</title>
        <authorList>
            <person name="Kelly R.D.W."/>
            <person name="Chandru A."/>
            <person name="Watson P.J."/>
            <person name="Song Y."/>
            <person name="Blades M."/>
            <person name="Robertson N.S."/>
            <person name="Jamieson A.G."/>
            <person name="Schwabe J.W.R."/>
            <person name="Cowley S.M."/>
        </authorList>
    </citation>
    <scope>CROTONYLATION AT LYS-19</scope>
    <scope>ACETYLATION AT LYS-19</scope>
</reference>
<reference key="36">
    <citation type="journal article" date="2019" name="Nature">
        <title>Histone serotonylation is a permissive modification that enhances TFIID binding to H3K4me3.</title>
        <authorList>
            <person name="Farrelly L.A."/>
            <person name="Thompson R.E."/>
            <person name="Zhao S."/>
            <person name="Lepack A.E."/>
            <person name="Lyu Y."/>
            <person name="Bhanu N.V."/>
            <person name="Zhang B."/>
            <person name="Loh Y.E."/>
            <person name="Ramakrishnan A."/>
            <person name="Vadodaria K.C."/>
            <person name="Heard K.J."/>
            <person name="Erikson G."/>
            <person name="Nakadai T."/>
            <person name="Bastle R.M."/>
            <person name="Lukasak B.J."/>
            <person name="Zebroski H. III"/>
            <person name="Alenina N."/>
            <person name="Bader M."/>
            <person name="Berton O."/>
            <person name="Roeder R.G."/>
            <person name="Molina H."/>
            <person name="Gage F.H."/>
            <person name="Shen L."/>
            <person name="Garcia B.A."/>
            <person name="Li H."/>
            <person name="Muir T.W."/>
            <person name="Maze I."/>
        </authorList>
    </citation>
    <scope>SEROTONYLATION AT GLN-6</scope>
</reference>
<reference key="37">
    <citation type="journal article" date="2019" name="Nature">
        <title>Metabolic regulation of gene expression by histone lactylation.</title>
        <authorList>
            <person name="Zhang D."/>
            <person name="Tang Z."/>
            <person name="Huang H."/>
            <person name="Zhou G."/>
            <person name="Cui C."/>
            <person name="Weng Y."/>
            <person name="Liu W."/>
            <person name="Kim S."/>
            <person name="Lee S."/>
            <person name="Perez-Neut M."/>
            <person name="Ding J."/>
            <person name="Czyz D."/>
            <person name="Hu R."/>
            <person name="Ye Z."/>
            <person name="He M."/>
            <person name="Zheng Y.G."/>
            <person name="Shuman H.A."/>
            <person name="Dai L."/>
            <person name="Ren B."/>
            <person name="Roeder R.G."/>
            <person name="Becker L."/>
            <person name="Zhao Y."/>
        </authorList>
    </citation>
    <scope>LACTYLATION AT LYS-15; LYS-19; LYS-24; LYS-28 AND LYS-57</scope>
</reference>
<feature type="initiator methionine" description="Removed" evidence="2">
    <location>
        <position position="1"/>
    </location>
</feature>
<feature type="chain" id="PRO_0000221249" description="Histone H3.1">
    <location>
        <begin position="2"/>
        <end position="136"/>
    </location>
</feature>
<feature type="region of interest" description="Disordered" evidence="7">
    <location>
        <begin position="1"/>
        <end position="43"/>
    </location>
</feature>
<feature type="modified residue" description="Asymmetric dimethylarginine; by PRMT6; alternate" evidence="2">
    <location>
        <position position="3"/>
    </location>
</feature>
<feature type="modified residue" description="Citrulline; alternate" evidence="15">
    <location>
        <position position="3"/>
    </location>
</feature>
<feature type="modified residue" description="Phosphoarginine; alternate" evidence="35">
    <location>
        <position position="3"/>
    </location>
</feature>
<feature type="modified residue" description="Phosphothreonine; by HASPIN and VRK1" evidence="2 18">
    <location>
        <position position="4"/>
    </location>
</feature>
<feature type="modified residue" description="Allysine; alternate" evidence="2">
    <location>
        <position position="5"/>
    </location>
</feature>
<feature type="modified residue" description="N6,N6,N6-trimethyllysine; alternate" evidence="10 23">
    <location>
        <position position="5"/>
    </location>
</feature>
<feature type="modified residue" description="N6,N6-dimethyllysine; alternate" evidence="10 23">
    <location>
        <position position="5"/>
    </location>
</feature>
<feature type="modified residue" description="N6-(2-hydroxyisobutyryl)lysine; alternate" evidence="28">
    <location>
        <position position="5"/>
    </location>
</feature>
<feature type="modified residue" description="N6-(beta-hydroxybutyryl)lysine; alternate" evidence="30">
    <location>
        <position position="5"/>
    </location>
</feature>
<feature type="modified residue" description="N6-acetyllysine; alternate" evidence="23">
    <location>
        <position position="5"/>
    </location>
</feature>
<feature type="modified residue" description="N6-crotonyllysine; alternate" evidence="26">
    <location>
        <position position="5"/>
    </location>
</feature>
<feature type="modified residue" description="N6-methyllysine; alternate" evidence="10 23">
    <location>
        <position position="5"/>
    </location>
</feature>
<feature type="modified residue" description="5-glutamyl dopamine; alternate" evidence="2">
    <location>
        <position position="6"/>
    </location>
</feature>
<feature type="modified residue" description="5-glutamyl serotonin; alternate" evidence="33">
    <location>
        <position position="6"/>
    </location>
</feature>
<feature type="modified residue" description="Phosphothreonine; by PKC" evidence="2">
    <location>
        <position position="7"/>
    </location>
</feature>
<feature type="modified residue" description="Citrulline; alternate" evidence="15">
    <location>
        <position position="9"/>
    </location>
</feature>
<feature type="modified residue" description="Symmetric dimethylarginine; by PRMT5; alternate" evidence="16">
    <location>
        <position position="9"/>
    </location>
</feature>
<feature type="modified residue" description="N6,N6,N6-trimethyllysine; alternate" evidence="14 23">
    <location>
        <position position="10"/>
    </location>
</feature>
<feature type="modified residue" description="N6,N6-dimethyllysine; alternate" evidence="14 23">
    <location>
        <position position="10"/>
    </location>
</feature>
<feature type="modified residue" description="N6-(2-hydroxyisobutyryl)lysine; alternate" evidence="28">
    <location>
        <position position="10"/>
    </location>
</feature>
<feature type="modified residue" description="N6-(beta-hydroxybutyryl)lysine; alternate" evidence="30">
    <location>
        <position position="10"/>
    </location>
</feature>
<feature type="modified residue" description="N6-acetyllysine; alternate" evidence="16 23">
    <location>
        <position position="10"/>
    </location>
</feature>
<feature type="modified residue" description="N6-crotonyllysine; alternate" evidence="26">
    <location>
        <position position="10"/>
    </location>
</feature>
<feature type="modified residue" description="N6-lactoyllysine; alternate" evidence="2">
    <location>
        <position position="10"/>
    </location>
</feature>
<feature type="modified residue" description="N6-methyllysine; alternate" evidence="14 23">
    <location>
        <position position="10"/>
    </location>
</feature>
<feature type="modified residue" description="ADP-ribosylserine; alternate" evidence="2">
    <location>
        <position position="11"/>
    </location>
</feature>
<feature type="modified residue" description="Phosphoserine; alternate; by AURKB, AURKC, RPS6KA3, RPS6KA4 and RPS6KA5" evidence="8 12 18 20 21">
    <location>
        <position position="11"/>
    </location>
</feature>
<feature type="modified residue" description="Phosphothreonine; by PKC and CHEK1" evidence="2">
    <location>
        <position position="12"/>
    </location>
</feature>
<feature type="modified residue" description="N6-(2-hydroxyisobutyryl)lysine; alternate" evidence="28">
    <location>
        <position position="15"/>
    </location>
</feature>
<feature type="modified residue" description="N6-(beta-hydroxybutyryl)lysine; alternate" evidence="30">
    <location>
        <position position="15"/>
    </location>
</feature>
<feature type="modified residue" description="N6-acetyllysine; alternate" evidence="13 14 23">
    <location>
        <position position="15"/>
    </location>
</feature>
<feature type="modified residue" description="N6-glutaryllysine; alternate" evidence="2">
    <location>
        <position position="15"/>
    </location>
</feature>
<feature type="modified residue" description="N6-lactoyllysine; alternate" evidence="34">
    <location>
        <position position="15"/>
    </location>
</feature>
<feature type="modified residue" description="N6-succinyllysine; alternate" evidence="2">
    <location>
        <position position="15"/>
    </location>
</feature>
<feature type="modified residue" description="Asymmetric dimethylarginine; by CARM1; alternate" evidence="10 11 13 17">
    <location>
        <position position="18"/>
    </location>
</feature>
<feature type="modified residue" description="Citrulline; alternate" evidence="15">
    <location>
        <position position="18"/>
    </location>
</feature>
<feature type="modified residue" description="N6-(2-hydroxyisobutyryl)lysine; alternate" evidence="28">
    <location>
        <position position="19"/>
    </location>
</feature>
<feature type="modified residue" description="N6-(beta-hydroxybutyryl)lysine; alternate" evidence="30">
    <location>
        <position position="19"/>
    </location>
</feature>
<feature type="modified residue" description="N6-acetyllysine; alternate" evidence="13 14 23 32">
    <location>
        <position position="19"/>
    </location>
</feature>
<feature type="modified residue" description="N6-butyryllysine; alternate" evidence="29">
    <location>
        <position position="19"/>
    </location>
</feature>
<feature type="modified residue" description="N6-crotonyllysine; alternate" evidence="26 32">
    <location>
        <position position="19"/>
    </location>
</feature>
<feature type="modified residue" description="N6-glutaryllysine; alternate" evidence="2">
    <location>
        <position position="19"/>
    </location>
</feature>
<feature type="modified residue" description="N6-lactoyllysine; alternate" evidence="34">
    <location>
        <position position="19"/>
    </location>
</feature>
<feature type="modified residue" description="N6-methyllysine; alternate" evidence="23">
    <location>
        <position position="19"/>
    </location>
</feature>
<feature type="modified residue" description="N6-(2-hydroxyisobutyryl)lysine; alternate" evidence="28">
    <location>
        <position position="24"/>
    </location>
</feature>
<feature type="modified residue" description="N6-(beta-hydroxybutyryl)lysine; alternate" evidence="30">
    <location>
        <position position="24"/>
    </location>
</feature>
<feature type="modified residue" description="N6-acetyllysine; alternate" evidence="13 14 23">
    <location>
        <position position="24"/>
    </location>
</feature>
<feature type="modified residue" description="N6-butyryllysine; alternate" evidence="29">
    <location>
        <position position="24"/>
    </location>
</feature>
<feature type="modified residue" description="N6-crotonyllysine; alternate" evidence="26">
    <location>
        <position position="24"/>
    </location>
</feature>
<feature type="modified residue" description="N6-glutaryllysine; alternate" evidence="2">
    <location>
        <position position="24"/>
    </location>
</feature>
<feature type="modified residue" description="N6-lactoyllysine; alternate" evidence="34">
    <location>
        <position position="24"/>
    </location>
</feature>
<feature type="modified residue" description="N6-methyllysine; alternate" evidence="23">
    <location>
        <position position="24"/>
    </location>
</feature>
<feature type="modified residue" description="Citrulline" evidence="15">
    <location>
        <position position="27"/>
    </location>
</feature>
<feature type="modified residue" description="N6,N6,N6-trimethyllysine; alternate" evidence="14 23">
    <location>
        <position position="28"/>
    </location>
</feature>
<feature type="modified residue" description="N6,N6-dimethyllysine; alternate" evidence="14 23">
    <location>
        <position position="28"/>
    </location>
</feature>
<feature type="modified residue" description="N6-(2-hydroxyisobutyryl)lysine; alternate" evidence="28">
    <location>
        <position position="28"/>
    </location>
</feature>
<feature type="modified residue" description="N6-acetyllysine; alternate" evidence="23">
    <location>
        <position position="28"/>
    </location>
</feature>
<feature type="modified residue" description="N6-butyryllysine; alternate" evidence="29">
    <location>
        <position position="28"/>
    </location>
</feature>
<feature type="modified residue" description="N6-crotonyllysine; alternate" evidence="26">
    <location>
        <position position="28"/>
    </location>
</feature>
<feature type="modified residue" description="N6-glutaryllysine; alternate" evidence="2">
    <location>
        <position position="28"/>
    </location>
</feature>
<feature type="modified residue" description="N6-lactoyllysine; alternate" evidence="34">
    <location>
        <position position="28"/>
    </location>
</feature>
<feature type="modified residue" description="N6-methyllysine; alternate" evidence="14 23">
    <location>
        <position position="28"/>
    </location>
</feature>
<feature type="modified residue" description="ADP-ribosylserine; alternate" evidence="2">
    <location>
        <position position="29"/>
    </location>
</feature>
<feature type="modified residue" description="Phosphoserine; alternate; by AURKB, AURKC and RPS6KA5" evidence="8 9 12 19 20 21">
    <location>
        <position position="29"/>
    </location>
</feature>
<feature type="modified residue" description="N6,N6,N6-trimethyllysine; alternate" evidence="36 37">
    <location>
        <position position="37"/>
    </location>
</feature>
<feature type="modified residue" description="N6,N6-dimethyllysine; alternate" evidence="14 23">
    <location>
        <position position="37"/>
    </location>
</feature>
<feature type="modified residue" description="N6-(2-hydroxyisobutyryl)lysine; alternate" evidence="28">
    <location>
        <position position="37"/>
    </location>
</feature>
<feature type="modified residue" description="N6-acetyllysine; alternate" evidence="22">
    <location>
        <position position="37"/>
    </location>
</feature>
<feature type="modified residue" description="N6-butyryllysine; alternate" evidence="29">
    <location>
        <position position="37"/>
    </location>
</feature>
<feature type="modified residue" description="N6-methyllysine; alternate" evidence="14 23">
    <location>
        <position position="37"/>
    </location>
</feature>
<feature type="modified residue" description="N6-butyryllysine; alternate" evidence="29">
    <location>
        <position position="38"/>
    </location>
</feature>
<feature type="modified residue" description="N6-methyllysine; alternate" evidence="2">
    <location>
        <position position="38"/>
    </location>
</feature>
<feature type="modified residue" description="Phosphotyrosine" evidence="2">
    <location>
        <position position="42"/>
    </location>
</feature>
<feature type="modified residue" description="N6,N6,N6-trimethyllysine; alternate" evidence="2">
    <location>
        <position position="57"/>
    </location>
</feature>
<feature type="modified residue" description="N6-(2-hydroxyisobutyryl)lysine; alternate" evidence="28">
    <location>
        <position position="57"/>
    </location>
</feature>
<feature type="modified residue" description="N6-(beta-hydroxybutyryl)lysine; alternate" evidence="30">
    <location>
        <position position="57"/>
    </location>
</feature>
<feature type="modified residue" description="N6-acetyllysine; alternate" evidence="2">
    <location>
        <position position="57"/>
    </location>
</feature>
<feature type="modified residue" description="N6-crotonyllysine; alternate" evidence="26">
    <location>
        <position position="57"/>
    </location>
</feature>
<feature type="modified residue" description="N6-glutaryllysine; alternate" evidence="2">
    <location>
        <position position="57"/>
    </location>
</feature>
<feature type="modified residue" description="N6-lactoyllysine; alternate" evidence="34">
    <location>
        <position position="57"/>
    </location>
</feature>
<feature type="modified residue" description="N6-methyllysine; by EHMT2; alternate" evidence="2">
    <location>
        <position position="57"/>
    </location>
</feature>
<feature type="modified residue" description="N6-succinyllysine; alternate" evidence="27">
    <location>
        <position position="57"/>
    </location>
</feature>
<feature type="modified residue" description="Phosphoserine" evidence="2">
    <location>
        <position position="58"/>
    </location>
</feature>
<feature type="modified residue" description="N6-(2-hydroxyisobutyryl)lysine; alternate" evidence="28">
    <location>
        <position position="65"/>
    </location>
</feature>
<feature type="modified residue" description="N6-methyllysine; alternate" evidence="2">
    <location>
        <position position="65"/>
    </location>
</feature>
<feature type="modified residue" description="N6,N6,N6-trimethyllysine; alternate" evidence="14 23">
    <location>
        <position position="80"/>
    </location>
</feature>
<feature type="modified residue" description="N6,N6-dimethyllysine; alternate" evidence="14 23">
    <location>
        <position position="80"/>
    </location>
</feature>
<feature type="modified residue" description="N6-(2-hydroxyisobutyryl)lysine; alternate" evidence="28">
    <location>
        <position position="80"/>
    </location>
</feature>
<feature type="modified residue" description="N6-acetyllysine; alternate" evidence="2">
    <location>
        <position position="80"/>
    </location>
</feature>
<feature type="modified residue" description="N6-butyryllysine; alternate" evidence="29">
    <location>
        <position position="80"/>
    </location>
</feature>
<feature type="modified residue" description="N6-glutaryllysine; alternate" evidence="2">
    <location>
        <position position="80"/>
    </location>
</feature>
<feature type="modified residue" description="N6-lactoyllysine; alternate" evidence="2">
    <location>
        <position position="80"/>
    </location>
</feature>
<feature type="modified residue" description="N6-methyllysine; alternate" evidence="14 23">
    <location>
        <position position="80"/>
    </location>
</feature>
<feature type="modified residue" description="N6-succinyllysine; alternate" evidence="27">
    <location>
        <position position="80"/>
    </location>
</feature>
<feature type="modified residue" description="Phosphothreonine" evidence="2">
    <location>
        <position position="81"/>
    </location>
</feature>
<feature type="modified residue" description="Phosphoserine" evidence="3">
    <location>
        <position position="87"/>
    </location>
</feature>
<feature type="modified residue" description="Phosphothreonine" evidence="5">
    <location>
        <position position="108"/>
    </location>
</feature>
<feature type="modified residue" description="N6-acetyllysine; alternate" evidence="2">
    <location>
        <position position="116"/>
    </location>
</feature>
<feature type="modified residue" description="N6-glutaryllysine; alternate" evidence="2">
    <location>
        <position position="116"/>
    </location>
</feature>
<feature type="modified residue" description="N6-(2-hydroxyisobutyryl)lysine; alternate" evidence="28">
    <location>
        <position position="123"/>
    </location>
</feature>
<feature type="modified residue" description="N6-acetyllysine; alternate" evidence="2">
    <location>
        <position position="123"/>
    </location>
</feature>
<feature type="modified residue" description="N6-butyryllysine; alternate" evidence="29">
    <location>
        <position position="123"/>
    </location>
</feature>
<feature type="modified residue" description="N6-glutaryllysine; alternate" evidence="2">
    <location>
        <position position="123"/>
    </location>
</feature>
<feature type="modified residue" description="N6-methyllysine; alternate" evidence="14">
    <location>
        <position position="123"/>
    </location>
</feature>
<feature type="modified residue" description="N6-succinyllysine; alternate" evidence="2">
    <location>
        <position position="123"/>
    </location>
</feature>
<feature type="modified residue" description="Phosphoarginine" evidence="35">
    <location>
        <position position="129"/>
    </location>
</feature>
<feature type="modified residue" description="Phosphoarginine" evidence="35">
    <location>
        <position position="130"/>
    </location>
</feature>
<feature type="modified residue" description="Phosphoarginine" evidence="6">
    <location>
        <position position="132"/>
    </location>
</feature>
<feature type="lipid moiety-binding region" description="N6-decanoyllysine" evidence="2">
    <location>
        <position position="19"/>
    </location>
</feature>
<feature type="strand" evidence="43">
    <location>
        <begin position="4"/>
        <end position="7"/>
    </location>
</feature>
<feature type="helix" evidence="44">
    <location>
        <begin position="12"/>
        <end position="15"/>
    </location>
</feature>
<feature type="helix" evidence="42">
    <location>
        <begin position="46"/>
        <end position="57"/>
    </location>
</feature>
<feature type="helix" evidence="42">
    <location>
        <begin position="65"/>
        <end position="77"/>
    </location>
</feature>
<feature type="strand" evidence="42">
    <location>
        <begin position="80"/>
        <end position="82"/>
    </location>
</feature>
<feature type="helix" evidence="42">
    <location>
        <begin position="87"/>
        <end position="114"/>
    </location>
</feature>
<feature type="strand" evidence="42">
    <location>
        <begin position="118"/>
        <end position="120"/>
    </location>
</feature>
<feature type="helix" evidence="42">
    <location>
        <begin position="122"/>
        <end position="131"/>
    </location>
</feature>
<accession>P68433</accession>
<accession>P02295</accession>
<accession>P02296</accession>
<accession>P16106</accession>
<accession>Q05A97</accession>
<accession>Q3B7Z8</accession>
<accession>Q3B7Z9</accession>
<accession>Q5T009</accession>
<proteinExistence type="evidence at protein level"/>